<dbReference type="EC" id="6.1.1.1" evidence="1"/>
<dbReference type="EMBL" id="BA000002">
    <property type="protein sequence ID" value="BAA81085.2"/>
    <property type="status" value="ALT_INIT"/>
    <property type="molecule type" value="Genomic_DNA"/>
</dbReference>
<dbReference type="PIR" id="E72512">
    <property type="entry name" value="E72512"/>
</dbReference>
<dbReference type="PDB" id="2CYA">
    <property type="method" value="X-ray"/>
    <property type="resolution" value="2.20 A"/>
    <property type="chains" value="A=1-364"/>
</dbReference>
<dbReference type="PDBsum" id="2CYA"/>
<dbReference type="SMR" id="Q9YA64"/>
<dbReference type="STRING" id="272557.APE_2074.1"/>
<dbReference type="EnsemblBacteria" id="BAA81085">
    <property type="protein sequence ID" value="BAA81085"/>
    <property type="gene ID" value="APE_2074.1"/>
</dbReference>
<dbReference type="KEGG" id="ape:APE_2074.1"/>
<dbReference type="PATRIC" id="fig|272557.25.peg.1380"/>
<dbReference type="eggNOG" id="arCOG01886">
    <property type="taxonomic scope" value="Archaea"/>
</dbReference>
<dbReference type="BRENDA" id="6.1.1.1">
    <property type="organism ID" value="171"/>
</dbReference>
<dbReference type="EvolutionaryTrace" id="Q9YA64"/>
<dbReference type="Proteomes" id="UP000002518">
    <property type="component" value="Chromosome"/>
</dbReference>
<dbReference type="GO" id="GO:0005737">
    <property type="term" value="C:cytoplasm"/>
    <property type="evidence" value="ECO:0007669"/>
    <property type="project" value="UniProtKB-SubCell"/>
</dbReference>
<dbReference type="GO" id="GO:0005524">
    <property type="term" value="F:ATP binding"/>
    <property type="evidence" value="ECO:0007669"/>
    <property type="project" value="UniProtKB-UniRule"/>
</dbReference>
<dbReference type="GO" id="GO:0004831">
    <property type="term" value="F:tyrosine-tRNA ligase activity"/>
    <property type="evidence" value="ECO:0007669"/>
    <property type="project" value="UniProtKB-UniRule"/>
</dbReference>
<dbReference type="GO" id="GO:0006437">
    <property type="term" value="P:tyrosyl-tRNA aminoacylation"/>
    <property type="evidence" value="ECO:0007669"/>
    <property type="project" value="UniProtKB-UniRule"/>
</dbReference>
<dbReference type="CDD" id="cd00805">
    <property type="entry name" value="TyrRS_core"/>
    <property type="match status" value="1"/>
</dbReference>
<dbReference type="Gene3D" id="3.40.50.620">
    <property type="entry name" value="HUPs"/>
    <property type="match status" value="1"/>
</dbReference>
<dbReference type="Gene3D" id="1.10.240.10">
    <property type="entry name" value="Tyrosyl-Transfer RNA Synthetase"/>
    <property type="match status" value="1"/>
</dbReference>
<dbReference type="HAMAP" id="MF_02009">
    <property type="entry name" value="Tyr_tRNA_synth_type4"/>
    <property type="match status" value="1"/>
</dbReference>
<dbReference type="InterPro" id="IPR002305">
    <property type="entry name" value="aa-tRNA-synth_Ic"/>
</dbReference>
<dbReference type="InterPro" id="IPR014729">
    <property type="entry name" value="Rossmann-like_a/b/a_fold"/>
</dbReference>
<dbReference type="InterPro" id="IPR002307">
    <property type="entry name" value="Tyr-tRNA-ligase"/>
</dbReference>
<dbReference type="InterPro" id="IPR023678">
    <property type="entry name" value="Tyr-tRNA-ligase_4"/>
</dbReference>
<dbReference type="InterPro" id="IPR023617">
    <property type="entry name" value="Tyr-tRNA-ligase_arc/euk-type"/>
</dbReference>
<dbReference type="InterPro" id="IPR050489">
    <property type="entry name" value="Tyr-tRNA_synthase"/>
</dbReference>
<dbReference type="NCBIfam" id="NF006330">
    <property type="entry name" value="PRK08560.1"/>
    <property type="match status" value="1"/>
</dbReference>
<dbReference type="NCBIfam" id="TIGR00234">
    <property type="entry name" value="tyrS"/>
    <property type="match status" value="1"/>
</dbReference>
<dbReference type="PANTHER" id="PTHR46264:SF4">
    <property type="entry name" value="TYROSINE--TRNA LIGASE, CYTOPLASMIC"/>
    <property type="match status" value="1"/>
</dbReference>
<dbReference type="PANTHER" id="PTHR46264">
    <property type="entry name" value="TYROSINE-TRNA LIGASE"/>
    <property type="match status" value="1"/>
</dbReference>
<dbReference type="Pfam" id="PF00579">
    <property type="entry name" value="tRNA-synt_1b"/>
    <property type="match status" value="1"/>
</dbReference>
<dbReference type="PIRSF" id="PIRSF006588">
    <property type="entry name" value="TyrRS_arch_euk"/>
    <property type="match status" value="1"/>
</dbReference>
<dbReference type="PRINTS" id="PR01040">
    <property type="entry name" value="TRNASYNTHTYR"/>
</dbReference>
<dbReference type="SUPFAM" id="SSF52374">
    <property type="entry name" value="Nucleotidylyl transferase"/>
    <property type="match status" value="1"/>
</dbReference>
<feature type="chain" id="PRO_0000240262" description="Tyrosine--tRNA ligase">
    <location>
        <begin position="1"/>
        <end position="364"/>
    </location>
</feature>
<feature type="short sequence motif" description="'KMSKS' region">
    <location>
        <begin position="238"/>
        <end position="242"/>
    </location>
</feature>
<feature type="binding site" evidence="1">
    <location>
        <position position="39"/>
    </location>
    <ligand>
        <name>L-tyrosine</name>
        <dbReference type="ChEBI" id="CHEBI:58315"/>
    </ligand>
</feature>
<feature type="binding site" evidence="3">
    <location>
        <position position="49"/>
    </location>
    <ligand>
        <name>ATP</name>
        <dbReference type="ChEBI" id="CHEBI:30616"/>
    </ligand>
</feature>
<feature type="binding site" evidence="3">
    <location>
        <position position="52"/>
    </location>
    <ligand>
        <name>ATP</name>
        <dbReference type="ChEBI" id="CHEBI:30616"/>
    </ligand>
</feature>
<feature type="binding site" evidence="1">
    <location>
        <position position="165"/>
    </location>
    <ligand>
        <name>L-tyrosine</name>
        <dbReference type="ChEBI" id="CHEBI:58315"/>
    </ligand>
</feature>
<feature type="binding site" evidence="1">
    <location>
        <position position="169"/>
    </location>
    <ligand>
        <name>L-tyrosine</name>
        <dbReference type="ChEBI" id="CHEBI:58315"/>
    </ligand>
</feature>
<feature type="binding site" evidence="1">
    <location>
        <position position="172"/>
    </location>
    <ligand>
        <name>L-tyrosine</name>
        <dbReference type="ChEBI" id="CHEBI:58315"/>
    </ligand>
</feature>
<feature type="binding site" evidence="1">
    <location>
        <position position="187"/>
    </location>
    <ligand>
        <name>L-tyrosine</name>
        <dbReference type="ChEBI" id="CHEBI:58315"/>
    </ligand>
</feature>
<feature type="binding site" evidence="3">
    <location>
        <position position="241"/>
    </location>
    <ligand>
        <name>ATP</name>
        <dbReference type="ChEBI" id="CHEBI:30616"/>
    </ligand>
</feature>
<feature type="helix" evidence="4">
    <location>
        <begin position="5"/>
        <end position="14"/>
    </location>
</feature>
<feature type="strand" evidence="4">
    <location>
        <begin position="18"/>
        <end position="21"/>
    </location>
</feature>
<feature type="helix" evidence="4">
    <location>
        <begin position="23"/>
        <end position="32"/>
    </location>
</feature>
<feature type="strand" evidence="4">
    <location>
        <begin position="37"/>
        <end position="42"/>
    </location>
</feature>
<feature type="helix" evidence="4">
    <location>
        <begin position="51"/>
        <end position="64"/>
    </location>
</feature>
<feature type="strand" evidence="4">
    <location>
        <begin position="68"/>
        <end position="73"/>
    </location>
</feature>
<feature type="helix" evidence="4">
    <location>
        <begin position="75"/>
        <end position="80"/>
    </location>
</feature>
<feature type="helix" evidence="4">
    <location>
        <begin position="83"/>
        <end position="86"/>
    </location>
</feature>
<feature type="helix" evidence="4">
    <location>
        <begin position="88"/>
        <end position="104"/>
    </location>
</feature>
<feature type="helix" evidence="4">
    <location>
        <begin position="109"/>
        <end position="111"/>
    </location>
</feature>
<feature type="strand" evidence="4">
    <location>
        <begin position="113"/>
        <end position="116"/>
    </location>
</feature>
<feature type="helix" evidence="4">
    <location>
        <begin position="117"/>
        <end position="121"/>
    </location>
</feature>
<feature type="helix" evidence="4">
    <location>
        <begin position="124"/>
        <end position="135"/>
    </location>
</feature>
<feature type="helix" evidence="4">
    <location>
        <begin position="139"/>
        <end position="143"/>
    </location>
</feature>
<feature type="helix" evidence="4">
    <location>
        <begin position="155"/>
        <end position="157"/>
    </location>
</feature>
<feature type="helix" evidence="4">
    <location>
        <begin position="161"/>
        <end position="175"/>
    </location>
</feature>
<feature type="strand" evidence="4">
    <location>
        <begin position="179"/>
        <end position="184"/>
    </location>
</feature>
<feature type="helix" evidence="4">
    <location>
        <begin position="185"/>
        <end position="187"/>
    </location>
</feature>
<feature type="helix" evidence="4">
    <location>
        <begin position="188"/>
        <end position="198"/>
    </location>
</feature>
<feature type="turn" evidence="4">
    <location>
        <begin position="199"/>
        <end position="202"/>
    </location>
</feature>
<feature type="strand" evidence="4">
    <location>
        <begin position="207"/>
        <end position="211"/>
    </location>
</feature>
<feature type="strand" evidence="4">
    <location>
        <begin position="241"/>
        <end position="243"/>
    </location>
</feature>
<feature type="helix" evidence="4">
    <location>
        <begin position="244"/>
        <end position="246"/>
    </location>
</feature>
<feature type="helix" evidence="4">
    <location>
        <begin position="254"/>
        <end position="262"/>
    </location>
</feature>
<feature type="helix" evidence="4">
    <location>
        <begin position="275"/>
        <end position="282"/>
    </location>
</feature>
<feature type="turn" evidence="4">
    <location>
        <begin position="283"/>
        <end position="286"/>
    </location>
</feature>
<feature type="strand" evidence="4">
    <location>
        <begin position="305"/>
        <end position="308"/>
    </location>
</feature>
<feature type="helix" evidence="4">
    <location>
        <begin position="309"/>
        <end position="317"/>
    </location>
</feature>
<feature type="helix" evidence="4">
    <location>
        <begin position="323"/>
        <end position="346"/>
    </location>
</feature>
<feature type="helix" evidence="4">
    <location>
        <begin position="349"/>
        <end position="360"/>
    </location>
</feature>
<accession>Q9YA64</accession>
<reference key="1">
    <citation type="journal article" date="1999" name="DNA Res.">
        <title>Complete genome sequence of an aerobic hyper-thermophilic crenarchaeon, Aeropyrum pernix K1.</title>
        <authorList>
            <person name="Kawarabayasi Y."/>
            <person name="Hino Y."/>
            <person name="Horikawa H."/>
            <person name="Yamazaki S."/>
            <person name="Haikawa Y."/>
            <person name="Jin-no K."/>
            <person name="Takahashi M."/>
            <person name="Sekine M."/>
            <person name="Baba S."/>
            <person name="Ankai A."/>
            <person name="Kosugi H."/>
            <person name="Hosoyama A."/>
            <person name="Fukui S."/>
            <person name="Nagai Y."/>
            <person name="Nishijima K."/>
            <person name="Nakazawa H."/>
            <person name="Takamiya M."/>
            <person name="Masuda S."/>
            <person name="Funahashi T."/>
            <person name="Tanaka T."/>
            <person name="Kudoh Y."/>
            <person name="Yamazaki J."/>
            <person name="Kushida N."/>
            <person name="Oguchi A."/>
            <person name="Aoki K."/>
            <person name="Kubota K."/>
            <person name="Nakamura Y."/>
            <person name="Nomura N."/>
            <person name="Sako Y."/>
            <person name="Kikuchi H."/>
        </authorList>
    </citation>
    <scope>NUCLEOTIDE SEQUENCE [LARGE SCALE GENOMIC DNA]</scope>
    <source>
        <strain>ATCC 700893 / DSM 11879 / JCM 9820 / NBRC 100138 / K1</strain>
    </source>
</reference>
<reference key="2">
    <citation type="journal article" date="2006" name="J. Mol. Biol.">
        <title>Crystal structures of tyrosyl-tRNA synthetases from Archaea.</title>
        <authorList>
            <person name="Kuratani M."/>
            <person name="Sakai H."/>
            <person name="Takahashi M."/>
            <person name="Yanagisawa T."/>
            <person name="Kobayashi T."/>
            <person name="Murayama K."/>
            <person name="Chen L."/>
            <person name="Liu Z.-J."/>
            <person name="Wang B.-C."/>
            <person name="Kuroishi C."/>
            <person name="Kuramitsu S."/>
            <person name="Terada T."/>
            <person name="Bessho Y."/>
            <person name="Shirouzu M."/>
            <person name="Sekine S."/>
            <person name="Yokoyama S."/>
        </authorList>
    </citation>
    <scope>X-RAY CRYSTALLOGRAPHY (2.2 ANGSTROMS)</scope>
    <scope>SUBUNIT</scope>
</reference>
<evidence type="ECO:0000255" key="1">
    <source>
        <dbReference type="HAMAP-Rule" id="MF_02009"/>
    </source>
</evidence>
<evidence type="ECO:0000269" key="2">
    <source>
    </source>
</evidence>
<evidence type="ECO:0000305" key="3"/>
<evidence type="ECO:0007829" key="4">
    <source>
        <dbReference type="PDB" id="2CYA"/>
    </source>
</evidence>
<protein>
    <recommendedName>
        <fullName evidence="1">Tyrosine--tRNA ligase</fullName>
        <ecNumber evidence="1">6.1.1.1</ecNumber>
    </recommendedName>
    <alternativeName>
        <fullName evidence="1">Tyrosyl-tRNA synthetase</fullName>
        <shortName evidence="1">TyrRS</shortName>
    </alternativeName>
</protein>
<proteinExistence type="evidence at protein level"/>
<keyword id="KW-0002">3D-structure</keyword>
<keyword id="KW-0030">Aminoacyl-tRNA synthetase</keyword>
<keyword id="KW-0067">ATP-binding</keyword>
<keyword id="KW-0963">Cytoplasm</keyword>
<keyword id="KW-0436">Ligase</keyword>
<keyword id="KW-0547">Nucleotide-binding</keyword>
<keyword id="KW-0648">Protein biosynthesis</keyword>
<keyword id="KW-1185">Reference proteome</keyword>
<name>SYY_AERPE</name>
<organism>
    <name type="scientific">Aeropyrum pernix (strain ATCC 700893 / DSM 11879 / JCM 9820 / NBRC 100138 / K1)</name>
    <dbReference type="NCBI Taxonomy" id="272557"/>
    <lineage>
        <taxon>Archaea</taxon>
        <taxon>Thermoproteota</taxon>
        <taxon>Thermoprotei</taxon>
        <taxon>Desulfurococcales</taxon>
        <taxon>Desulfurococcaceae</taxon>
        <taxon>Aeropyrum</taxon>
    </lineage>
</organism>
<gene>
    <name evidence="1" type="primary">tyrS</name>
    <name type="ordered locus">APE_2074.1</name>
</gene>
<sequence length="364" mass="40765">MVRVDVEERFNRIARNTVEIVTEEELKGLLASGARIKGYIGYEPSGVAHIGWLVWMYKVKDLVEAGVDFSVLEATWHAYINDKLGGDMDLIRAAARIVRRVMEAAGVPVERVRFVDAEELASDKDYWGLVIRVAKRASLARVRRALTIMGRRAEEAEVDASKLIYPLMQVSDIFYMDLDIALGGMDQRKAHMLARDVAEKLGRKKPVAIHTPIISSLQGPGRMEASQGEIDDVLAEVKMSKSKPETAVFVVDSDDDIRRKIRKAYCPAKQVQGNPVLEIARYILFARDGFTLRVDRPAKYGGPVEYTSYEELERDYTDGRLHPLDLKNAVAESLIEVVRPIRGAVLGDPAMKRALEAIEGKVTR</sequence>
<comment type="function">
    <text evidence="1">Catalyzes the attachment of tyrosine to tRNA(Tyr) in a two-step reaction: tyrosine is first activated by ATP to form Tyr-AMP and then transferred to the acceptor end of tRNA(Tyr).</text>
</comment>
<comment type="catalytic activity">
    <reaction evidence="1">
        <text>tRNA(Tyr) + L-tyrosine + ATP = L-tyrosyl-tRNA(Tyr) + AMP + diphosphate + H(+)</text>
        <dbReference type="Rhea" id="RHEA:10220"/>
        <dbReference type="Rhea" id="RHEA-COMP:9706"/>
        <dbReference type="Rhea" id="RHEA-COMP:9707"/>
        <dbReference type="ChEBI" id="CHEBI:15378"/>
        <dbReference type="ChEBI" id="CHEBI:30616"/>
        <dbReference type="ChEBI" id="CHEBI:33019"/>
        <dbReference type="ChEBI" id="CHEBI:58315"/>
        <dbReference type="ChEBI" id="CHEBI:78442"/>
        <dbReference type="ChEBI" id="CHEBI:78536"/>
        <dbReference type="ChEBI" id="CHEBI:456215"/>
        <dbReference type="EC" id="6.1.1.1"/>
    </reaction>
</comment>
<comment type="subunit">
    <text evidence="1 2">Homodimer.</text>
</comment>
<comment type="subcellular location">
    <subcellularLocation>
        <location evidence="1">Cytoplasm</location>
    </subcellularLocation>
</comment>
<comment type="similarity">
    <text evidence="1">Belongs to the class-I aminoacyl-tRNA synthetase family. TyrS type 4 subfamily.</text>
</comment>
<comment type="sequence caution" evidence="3">
    <conflict type="erroneous initiation">
        <sequence resource="EMBL-CDS" id="BAA81085"/>
    </conflict>
</comment>